<reference evidence="5" key="1">
    <citation type="submission" date="2007-02" db="EMBL/GenBank/DDBJ databases">
        <authorList>
            <consortium name="NIH - Zebrafish Gene Collection (ZGC) project"/>
        </authorList>
    </citation>
    <scope>NUCLEOTIDE SEQUENCE [LARGE SCALE MRNA]</scope>
    <source>
        <tissue evidence="5">Embryo</tissue>
    </source>
</reference>
<dbReference type="EMBL" id="BC133150">
    <property type="protein sequence ID" value="AAI33151.1"/>
    <property type="molecule type" value="mRNA"/>
</dbReference>
<dbReference type="RefSeq" id="NP_001075218.1">
    <property type="nucleotide sequence ID" value="NM_001081749.1"/>
</dbReference>
<dbReference type="SMR" id="A2RV29"/>
<dbReference type="FunCoup" id="A2RV29">
    <property type="interactions" value="512"/>
</dbReference>
<dbReference type="STRING" id="7955.ENSDARP00000151939"/>
<dbReference type="PaxDb" id="7955-ENSDARP00000080221"/>
<dbReference type="PeptideAtlas" id="A2RV29"/>
<dbReference type="GeneID" id="560756"/>
<dbReference type="KEGG" id="dre:560756"/>
<dbReference type="AGR" id="ZFIN:ZDB-GENE-070209-152"/>
<dbReference type="CTD" id="23567"/>
<dbReference type="ZFIN" id="ZDB-GENE-070209-152">
    <property type="gene designation" value="znf346"/>
</dbReference>
<dbReference type="eggNOG" id="ENOG502RVNK">
    <property type="taxonomic scope" value="Eukaryota"/>
</dbReference>
<dbReference type="InParanoid" id="A2RV29"/>
<dbReference type="OrthoDB" id="1925236at2759"/>
<dbReference type="PhylomeDB" id="A2RV29"/>
<dbReference type="PRO" id="PR:A2RV29"/>
<dbReference type="Proteomes" id="UP000000437">
    <property type="component" value="Chromosome 21"/>
</dbReference>
<dbReference type="GO" id="GO:0005737">
    <property type="term" value="C:cytoplasm"/>
    <property type="evidence" value="ECO:0007669"/>
    <property type="project" value="UniProtKB-SubCell"/>
</dbReference>
<dbReference type="GO" id="GO:0005634">
    <property type="term" value="C:nucleus"/>
    <property type="evidence" value="ECO:0000250"/>
    <property type="project" value="UniProtKB"/>
</dbReference>
<dbReference type="GO" id="GO:0003725">
    <property type="term" value="F:double-stranded RNA binding"/>
    <property type="evidence" value="ECO:0000250"/>
    <property type="project" value="UniProtKB"/>
</dbReference>
<dbReference type="GO" id="GO:0008270">
    <property type="term" value="F:zinc ion binding"/>
    <property type="evidence" value="ECO:0007669"/>
    <property type="project" value="UniProtKB-KW"/>
</dbReference>
<dbReference type="Gene3D" id="3.30.160.60">
    <property type="entry name" value="Classic Zinc Finger"/>
    <property type="match status" value="4"/>
</dbReference>
<dbReference type="InterPro" id="IPR003604">
    <property type="entry name" value="Matrin/U1-like-C_Znf_C2H2"/>
</dbReference>
<dbReference type="InterPro" id="IPR051868">
    <property type="entry name" value="ZN346_ZMAT4"/>
</dbReference>
<dbReference type="InterPro" id="IPR036236">
    <property type="entry name" value="Znf_C2H2_sf"/>
</dbReference>
<dbReference type="InterPro" id="IPR013087">
    <property type="entry name" value="Znf_C2H2_type"/>
</dbReference>
<dbReference type="PANTHER" id="PTHR46144:SF5">
    <property type="entry name" value="ZINC FINGER PROTEIN 346"/>
    <property type="match status" value="1"/>
</dbReference>
<dbReference type="PANTHER" id="PTHR46144">
    <property type="entry name" value="ZINC FINGER PROTEIN 385B-LIKE"/>
    <property type="match status" value="1"/>
</dbReference>
<dbReference type="Pfam" id="PF12874">
    <property type="entry name" value="zf-met"/>
    <property type="match status" value="4"/>
</dbReference>
<dbReference type="SMART" id="SM00355">
    <property type="entry name" value="ZnF_C2H2"/>
    <property type="match status" value="4"/>
</dbReference>
<dbReference type="SMART" id="SM00451">
    <property type="entry name" value="ZnF_U1"/>
    <property type="match status" value="4"/>
</dbReference>
<dbReference type="SUPFAM" id="SSF57667">
    <property type="entry name" value="beta-beta-alpha zinc fingers"/>
    <property type="match status" value="4"/>
</dbReference>
<feature type="chain" id="PRO_0000348933" description="Zinc finger protein 346">
    <location>
        <begin position="1"/>
        <end position="301"/>
    </location>
</feature>
<feature type="zinc finger region" description="Matrin-type 1" evidence="3">
    <location>
        <begin position="55"/>
        <end position="85"/>
    </location>
</feature>
<feature type="zinc finger region" description="Matrin-type 2" evidence="3">
    <location>
        <begin position="117"/>
        <end position="141"/>
    </location>
</feature>
<feature type="zinc finger region" description="Matrin-type 3" evidence="3">
    <location>
        <begin position="180"/>
        <end position="210"/>
    </location>
</feature>
<feature type="zinc finger region" description="Matrin-type 4" evidence="3">
    <location>
        <begin position="230"/>
        <end position="257"/>
    </location>
</feature>
<feature type="region of interest" description="Disordered" evidence="4">
    <location>
        <begin position="151"/>
        <end position="177"/>
    </location>
</feature>
<feature type="region of interest" description="Disordered" evidence="4">
    <location>
        <begin position="250"/>
        <end position="283"/>
    </location>
</feature>
<feature type="compositionally biased region" description="Basic residues" evidence="4">
    <location>
        <begin position="251"/>
        <end position="262"/>
    </location>
</feature>
<feature type="binding site" evidence="1">
    <location>
        <position position="57"/>
    </location>
    <ligand>
        <name>Zn(2+)</name>
        <dbReference type="ChEBI" id="CHEBI:29105"/>
        <label>1</label>
    </ligand>
</feature>
<feature type="binding site" evidence="1">
    <location>
        <position position="60"/>
    </location>
    <ligand>
        <name>Zn(2+)</name>
        <dbReference type="ChEBI" id="CHEBI:29105"/>
        <label>1</label>
    </ligand>
</feature>
<feature type="binding site" evidence="1">
    <location>
        <position position="73"/>
    </location>
    <ligand>
        <name>Zn(2+)</name>
        <dbReference type="ChEBI" id="CHEBI:29105"/>
        <label>1</label>
    </ligand>
</feature>
<feature type="binding site" evidence="1">
    <location>
        <position position="79"/>
    </location>
    <ligand>
        <name>Zn(2+)</name>
        <dbReference type="ChEBI" id="CHEBI:29105"/>
        <label>1</label>
    </ligand>
</feature>
<feature type="binding site" evidence="1">
    <location>
        <position position="119"/>
    </location>
    <ligand>
        <name>Zn(2+)</name>
        <dbReference type="ChEBI" id="CHEBI:29105"/>
        <label>2</label>
    </ligand>
</feature>
<feature type="binding site" evidence="1">
    <location>
        <position position="122"/>
    </location>
    <ligand>
        <name>Zn(2+)</name>
        <dbReference type="ChEBI" id="CHEBI:29105"/>
        <label>2</label>
    </ligand>
</feature>
<feature type="binding site" evidence="1">
    <location>
        <position position="135"/>
    </location>
    <ligand>
        <name>Zn(2+)</name>
        <dbReference type="ChEBI" id="CHEBI:29105"/>
        <label>2</label>
    </ligand>
</feature>
<feature type="binding site" evidence="1">
    <location>
        <position position="141"/>
    </location>
    <ligand>
        <name>Zn(2+)</name>
        <dbReference type="ChEBI" id="CHEBI:29105"/>
        <label>2</label>
    </ligand>
</feature>
<proteinExistence type="evidence at transcript level"/>
<keyword id="KW-0963">Cytoplasm</keyword>
<keyword id="KW-0479">Metal-binding</keyword>
<keyword id="KW-0539">Nucleus</keyword>
<keyword id="KW-1185">Reference proteome</keyword>
<keyword id="KW-0677">Repeat</keyword>
<keyword id="KW-0694">RNA-binding</keyword>
<keyword id="KW-0862">Zinc</keyword>
<keyword id="KW-0863">Zinc-finger</keyword>
<accession>A2RV29</accession>
<organism>
    <name type="scientific">Danio rerio</name>
    <name type="common">Zebrafish</name>
    <name type="synonym">Brachydanio rerio</name>
    <dbReference type="NCBI Taxonomy" id="7955"/>
    <lineage>
        <taxon>Eukaryota</taxon>
        <taxon>Metazoa</taxon>
        <taxon>Chordata</taxon>
        <taxon>Craniata</taxon>
        <taxon>Vertebrata</taxon>
        <taxon>Euteleostomi</taxon>
        <taxon>Actinopterygii</taxon>
        <taxon>Neopterygii</taxon>
        <taxon>Teleostei</taxon>
        <taxon>Ostariophysi</taxon>
        <taxon>Cypriniformes</taxon>
        <taxon>Danionidae</taxon>
        <taxon>Danioninae</taxon>
        <taxon>Danio</taxon>
    </lineage>
</organism>
<sequence>MERLVQRMYCLGMRDPPPANIMAQQEPNGDFPYLPSGAAEVNRMIKENSDLFSDSQCKVCSAVLISESQKLAHYQSKKHASKVRRYMSIHGSEEPIAKRFKPSGDDQSNVDEKDKYKACSVCNMTFSSPVVAQSHYQGKVHSKNLRMQSIGSQTPALPQPEAQAKKDDGMQGPAEQDPNRFCSICQASFNNPLMAQQHYSGKKHKKHMNKQKLMETFGPSTAPASTVKGYPCTVCNIELNSVEQYQAHISGSKHKNHAKPKKGPNAFAPPPDNYQPDYQYPTNEDCLEDPAEWDSFNVAYE</sequence>
<protein>
    <recommendedName>
        <fullName evidence="6">Zinc finger protein 346</fullName>
    </recommendedName>
    <alternativeName>
        <fullName evidence="2">Just another zinc finger protein</fullName>
        <shortName>Protein jaz</shortName>
    </alternativeName>
</protein>
<comment type="function">
    <text evidence="1">Binds preferentially to dsRNA, but also to RNA-DNA hybrids.</text>
</comment>
<comment type="subcellular location">
    <subcellularLocation>
        <location evidence="1">Nucleus</location>
    </subcellularLocation>
    <subcellularLocation>
        <location evidence="1">Cytoplasm</location>
    </subcellularLocation>
    <text evidence="1">Primarily nuclear.</text>
</comment>
<comment type="domain">
    <text evidence="2">The zinc-finger domains are required for binding to dsRNA, and also for nuclear localization.</text>
</comment>
<name>ZN346_DANRE</name>
<gene>
    <name evidence="6" type="primary">znf346</name>
    <name type="ORF">zgc:158750</name>
</gene>
<evidence type="ECO:0000250" key="1">
    <source>
        <dbReference type="UniProtKB" id="Q8AVN9"/>
    </source>
</evidence>
<evidence type="ECO:0000250" key="2">
    <source>
        <dbReference type="UniProtKB" id="Q9R0B7"/>
    </source>
</evidence>
<evidence type="ECO:0000255" key="3"/>
<evidence type="ECO:0000256" key="4">
    <source>
        <dbReference type="SAM" id="MobiDB-lite"/>
    </source>
</evidence>
<evidence type="ECO:0000312" key="5">
    <source>
        <dbReference type="EMBL" id="AAI33151.1"/>
    </source>
</evidence>
<evidence type="ECO:0000312" key="6">
    <source>
        <dbReference type="ZFIN" id="ZDB-GENE-070209-152"/>
    </source>
</evidence>